<reference key="1">
    <citation type="journal article" date="1987" name="Planta">
        <title>Expression of two nuclear genes encoding chloroplast proteins during early development of cucumber seedlings.</title>
        <authorList>
            <person name="Greenland A.J."/>
            <person name="Thomas M.V."/>
            <person name="Walden R.M."/>
        </authorList>
    </citation>
    <scope>NUCLEOTIDE SEQUENCE [MRNA]</scope>
</reference>
<accession>P08222</accession>
<proteinExistence type="evidence at transcript level"/>
<evidence type="ECO:0000250" key="1"/>
<evidence type="ECO:0000250" key="2">
    <source>
        <dbReference type="UniProtKB" id="P07371"/>
    </source>
</evidence>
<evidence type="ECO:0000250" key="3">
    <source>
        <dbReference type="UniProtKB" id="P12333"/>
    </source>
</evidence>
<evidence type="ECO:0000255" key="4"/>
<evidence type="ECO:0000305" key="5"/>
<comment type="function">
    <text>The light-harvesting complex (LHC) functions as a light receptor, it captures and delivers excitation energy to photosystems with which it is closely associated.</text>
</comment>
<comment type="cofactor">
    <text evidence="1">Binds at least 14 chlorophylls (8 Chl-a and 6 Chl-b) and carotenoids such as lutein and neoxanthin.</text>
</comment>
<comment type="subunit">
    <text>The LHC complex consists of chlorophyll a-b binding proteins.</text>
</comment>
<comment type="subcellular location">
    <subcellularLocation>
        <location>Plastid</location>
        <location>Chloroplast thylakoid membrane</location>
        <topology>Multi-pass membrane protein</topology>
    </subcellularLocation>
</comment>
<comment type="domain">
    <text>The N-terminus of the protein extends into the stroma where it is involved with adhesion of granal membranes and post-translational modifications; both are believed to mediate the distribution of excitation energy between photosystems I and II.</text>
</comment>
<comment type="PTM">
    <text evidence="1">Photoregulated by reversible phosphorylation of its threonine residues.</text>
</comment>
<comment type="similarity">
    <text evidence="5">Belongs to the light-harvesting chlorophyll a/b-binding (LHC) protein family.</text>
</comment>
<organism>
    <name type="scientific">Cucumis sativus</name>
    <name type="common">Cucumber</name>
    <dbReference type="NCBI Taxonomy" id="3659"/>
    <lineage>
        <taxon>Eukaryota</taxon>
        <taxon>Viridiplantae</taxon>
        <taxon>Streptophyta</taxon>
        <taxon>Embryophyta</taxon>
        <taxon>Tracheophyta</taxon>
        <taxon>Spermatophyta</taxon>
        <taxon>Magnoliopsida</taxon>
        <taxon>eudicotyledons</taxon>
        <taxon>Gunneridae</taxon>
        <taxon>Pentapetalae</taxon>
        <taxon>rosids</taxon>
        <taxon>fabids</taxon>
        <taxon>Cucurbitales</taxon>
        <taxon>Cucurbitaceae</taxon>
        <taxon>Benincaseae</taxon>
        <taxon>Cucumis</taxon>
    </lineage>
</organism>
<protein>
    <recommendedName>
        <fullName>Chlorophyll a-b binding protein of LHCII type 1</fullName>
    </recommendedName>
    <alternativeName>
        <fullName>Chlorophyll a-b binding protein of LHCII type I</fullName>
        <shortName>CAB</shortName>
        <shortName>LHCP</shortName>
    </alternativeName>
</protein>
<name>CB22_CUCSA</name>
<feature type="chain" id="PRO_0000165471" description="Chlorophyll a-b binding protein of LHCII type 1">
    <location>
        <begin position="1" status="less than"/>
        <end position="206"/>
    </location>
</feature>
<feature type="transmembrane region" description="Helical" evidence="4">
    <location>
        <begin position="40"/>
        <end position="60"/>
    </location>
</feature>
<feature type="transmembrane region" description="Helical" evidence="4">
    <location>
        <begin position="92"/>
        <end position="112"/>
    </location>
</feature>
<feature type="transmembrane region" description="Helical" evidence="4">
    <location>
        <begin position="160"/>
        <end position="180"/>
    </location>
</feature>
<feature type="binding site" evidence="1">
    <location>
        <position position="20"/>
    </location>
    <ligand>
        <name>chlorophyll a</name>
        <dbReference type="ChEBI" id="CHEBI:58416"/>
        <label>1</label>
    </ligand>
</feature>
<feature type="binding site" evidence="1">
    <location>
        <position position="26"/>
    </location>
    <ligand>
        <name>chlorophyll a</name>
        <dbReference type="ChEBI" id="CHEBI:58416"/>
        <label>1</label>
    </ligand>
</feature>
<feature type="binding site" description="axial binding residue" evidence="3">
    <location>
        <position position="39"/>
    </location>
    <ligand>
        <name>chlorophyll a</name>
        <dbReference type="ChEBI" id="CHEBI:58416"/>
        <label>1</label>
    </ligand>
    <ligandPart>
        <name>Mg</name>
        <dbReference type="ChEBI" id="CHEBI:25107"/>
    </ligandPart>
</feature>
<feature type="binding site" description="axial binding residue" evidence="3">
    <location>
        <position position="42"/>
    </location>
    <ligand>
        <name>chlorophyll a</name>
        <dbReference type="ChEBI" id="CHEBI:58416"/>
        <label>2</label>
    </ligand>
    <ligandPart>
        <name>Mg</name>
        <dbReference type="ChEBI" id="CHEBI:25107"/>
    </ligandPart>
</feature>
<feature type="binding site" evidence="1">
    <location>
        <position position="77"/>
    </location>
    <ligand>
        <name>chlorophyll a</name>
        <dbReference type="ChEBI" id="CHEBI:58416"/>
        <label>3</label>
    </ligand>
</feature>
<feature type="binding site" evidence="1">
    <location>
        <position position="87"/>
    </location>
    <ligand>
        <name>chlorophyll a</name>
        <dbReference type="ChEBI" id="CHEBI:58416"/>
        <label>3</label>
    </ligand>
</feature>
<feature type="binding site" description="axial binding residue" evidence="3">
    <location>
        <position position="93"/>
    </location>
    <ligand>
        <name>chlorophyll b</name>
        <dbReference type="ChEBI" id="CHEBI:61721"/>
        <label>2</label>
    </ligand>
    <ligandPart>
        <name>Mg</name>
        <dbReference type="ChEBI" id="CHEBI:25107"/>
    </ligandPart>
</feature>
<feature type="binding site" evidence="1">
    <location>
        <position position="97"/>
    </location>
    <ligand>
        <name>chlorophyll b</name>
        <dbReference type="ChEBI" id="CHEBI:61721"/>
        <label>3</label>
    </ligand>
</feature>
<feature type="binding site" evidence="1">
    <location>
        <position position="105"/>
    </location>
    <ligand>
        <name>chlorophyll b</name>
        <dbReference type="ChEBI" id="CHEBI:61721"/>
        <label>4</label>
    </ligand>
</feature>
<feature type="binding site" evidence="2">
    <location>
        <position position="105"/>
    </location>
    <ligand>
        <name>chlorophyll b</name>
        <dbReference type="ChEBI" id="CHEBI:61721"/>
        <label>5</label>
    </ligand>
</feature>
<feature type="binding site" description="axial binding residue" evidence="3">
    <location>
        <position position="113"/>
    </location>
    <ligand>
        <name>chlorophyll b</name>
        <dbReference type="ChEBI" id="CHEBI:61721"/>
        <label>3</label>
    </ligand>
    <ligandPart>
        <name>Mg</name>
        <dbReference type="ChEBI" id="CHEBI:25107"/>
    </ligandPart>
</feature>
<feature type="binding site" evidence="1">
    <location>
        <position position="116"/>
    </location>
    <ligand>
        <name>chlorophyll b</name>
        <dbReference type="ChEBI" id="CHEBI:61721"/>
        <label>4</label>
    </ligand>
</feature>
<feature type="binding site" evidence="1">
    <location>
        <position position="122"/>
    </location>
    <ligand>
        <name>chlorophyll b</name>
        <dbReference type="ChEBI" id="CHEBI:61721"/>
        <label>2</label>
    </ligand>
</feature>
<feature type="binding site" evidence="1">
    <location>
        <position position="153"/>
    </location>
    <ligand>
        <name>chlorophyll a</name>
        <dbReference type="ChEBI" id="CHEBI:58416"/>
        <label>5</label>
    </ligand>
</feature>
<feature type="binding site" description="axial binding residue" evidence="3">
    <location>
        <position position="154"/>
    </location>
    <ligand>
        <name>chlorophyll a</name>
        <dbReference type="ChEBI" id="CHEBI:58416"/>
        <label>3</label>
    </ligand>
    <ligandPart>
        <name>Mg</name>
        <dbReference type="ChEBI" id="CHEBI:25107"/>
    </ligandPart>
</feature>
<feature type="binding site" description="axial binding residue" evidence="3">
    <location>
        <position position="157"/>
    </location>
    <ligand>
        <name>chlorophyll a</name>
        <dbReference type="ChEBI" id="CHEBI:58416"/>
        <label>4</label>
    </ligand>
    <ligandPart>
        <name>Mg</name>
        <dbReference type="ChEBI" id="CHEBI:25107"/>
    </ligandPart>
</feature>
<feature type="binding site" evidence="1">
    <location>
        <position position="159"/>
    </location>
    <ligand>
        <name>chlorophyll a</name>
        <dbReference type="ChEBI" id="CHEBI:58416"/>
        <label>1</label>
    </ligand>
</feature>
<feature type="binding site" description="axial binding residue" evidence="3">
    <location>
        <position position="171"/>
    </location>
    <ligand>
        <name>chlorophyll a</name>
        <dbReference type="ChEBI" id="CHEBI:58416"/>
        <label>5</label>
    </ligand>
    <ligandPart>
        <name>Mg</name>
        <dbReference type="ChEBI" id="CHEBI:25107"/>
    </ligandPart>
</feature>
<feature type="binding site" description="axial binding residue" evidence="3">
    <location>
        <position position="186"/>
    </location>
    <ligand>
        <name>chlorophyll a</name>
        <dbReference type="ChEBI" id="CHEBI:58416"/>
        <label>6</label>
    </ligand>
    <ligandPart>
        <name>Mg</name>
        <dbReference type="ChEBI" id="CHEBI:25107"/>
    </ligandPart>
</feature>
<feature type="binding site" evidence="1">
    <location>
        <position position="195"/>
    </location>
    <ligand>
        <name>chlorophyll a</name>
        <dbReference type="ChEBI" id="CHEBI:58416"/>
        <label>6</label>
    </ligand>
</feature>
<feature type="binding site" evidence="1">
    <location>
        <position position="202"/>
    </location>
    <ligand>
        <name>chlorophyll b</name>
        <dbReference type="ChEBI" id="CHEBI:61721"/>
        <label>5</label>
    </ligand>
</feature>
<feature type="non-terminal residue">
    <location>
        <position position="1"/>
    </location>
</feature>
<sequence>PFSGEPPSYLTGEFPGDYGWDTAGLSADPETFAKNRELEVIHSTWAMLGALGCVFPELLSRNGVKFGEAVWFKAGSQIFSEGGLDYLGNPSLVHAQSILAIWACQVVLMGAVEGYRIAGGPLGEVTDPIYPGGSFDPLGLADDPEAFAELKVKELKNGRLAMFSMFGFFVQAIVTGKGPLENLADHLADPVNNNAWAYATNFVPGK</sequence>
<dbReference type="EMBL" id="M16058">
    <property type="protein sequence ID" value="AAA33125.1"/>
    <property type="molecule type" value="mRNA"/>
</dbReference>
<dbReference type="SMR" id="P08222"/>
<dbReference type="GO" id="GO:0009535">
    <property type="term" value="C:chloroplast thylakoid membrane"/>
    <property type="evidence" value="ECO:0007669"/>
    <property type="project" value="UniProtKB-SubCell"/>
</dbReference>
<dbReference type="GO" id="GO:0009522">
    <property type="term" value="C:photosystem I"/>
    <property type="evidence" value="ECO:0007669"/>
    <property type="project" value="UniProtKB-KW"/>
</dbReference>
<dbReference type="GO" id="GO:0009523">
    <property type="term" value="C:photosystem II"/>
    <property type="evidence" value="ECO:0007669"/>
    <property type="project" value="UniProtKB-KW"/>
</dbReference>
<dbReference type="GO" id="GO:0016168">
    <property type="term" value="F:chlorophyll binding"/>
    <property type="evidence" value="ECO:0007669"/>
    <property type="project" value="UniProtKB-KW"/>
</dbReference>
<dbReference type="GO" id="GO:0046872">
    <property type="term" value="F:metal ion binding"/>
    <property type="evidence" value="ECO:0007669"/>
    <property type="project" value="UniProtKB-KW"/>
</dbReference>
<dbReference type="GO" id="GO:0009765">
    <property type="term" value="P:photosynthesis, light harvesting"/>
    <property type="evidence" value="ECO:0007669"/>
    <property type="project" value="InterPro"/>
</dbReference>
<dbReference type="FunFam" id="1.10.3460.10:FF:000001">
    <property type="entry name" value="Chlorophyll a-b binding protein, chloroplastic"/>
    <property type="match status" value="1"/>
</dbReference>
<dbReference type="Gene3D" id="1.10.3460.10">
    <property type="entry name" value="Chlorophyll a/b binding protein domain"/>
    <property type="match status" value="1"/>
</dbReference>
<dbReference type="InterPro" id="IPR001344">
    <property type="entry name" value="Chloro_AB-bd_pln"/>
</dbReference>
<dbReference type="InterPro" id="IPR022796">
    <property type="entry name" value="Chloroa_b-bind"/>
</dbReference>
<dbReference type="PANTHER" id="PTHR21649">
    <property type="entry name" value="CHLOROPHYLL A/B BINDING PROTEIN"/>
    <property type="match status" value="1"/>
</dbReference>
<dbReference type="Pfam" id="PF00504">
    <property type="entry name" value="Chloroa_b-bind"/>
    <property type="match status" value="1"/>
</dbReference>
<dbReference type="SUPFAM" id="SSF103511">
    <property type="entry name" value="Chlorophyll a-b binding protein"/>
    <property type="match status" value="1"/>
</dbReference>
<keyword id="KW-0148">Chlorophyll</keyword>
<keyword id="KW-0150">Chloroplast</keyword>
<keyword id="KW-0157">Chromophore</keyword>
<keyword id="KW-0460">Magnesium</keyword>
<keyword id="KW-0472">Membrane</keyword>
<keyword id="KW-0479">Metal-binding</keyword>
<keyword id="KW-0597">Phosphoprotein</keyword>
<keyword id="KW-0602">Photosynthesis</keyword>
<keyword id="KW-0603">Photosystem I</keyword>
<keyword id="KW-0604">Photosystem II</keyword>
<keyword id="KW-0934">Plastid</keyword>
<keyword id="KW-0793">Thylakoid</keyword>
<keyword id="KW-0812">Transmembrane</keyword>
<keyword id="KW-1133">Transmembrane helix</keyword>